<accession>Q2P6Y2</accession>
<feature type="chain" id="PRO_0000332691" description="Ribonuclease H">
    <location>
        <begin position="1"/>
        <end position="150"/>
    </location>
</feature>
<feature type="domain" description="RNase H type-1" evidence="2">
    <location>
        <begin position="1"/>
        <end position="141"/>
    </location>
</feature>
<feature type="binding site" evidence="1">
    <location>
        <position position="9"/>
    </location>
    <ligand>
        <name>Mg(2+)</name>
        <dbReference type="ChEBI" id="CHEBI:18420"/>
        <label>1</label>
    </ligand>
</feature>
<feature type="binding site" evidence="1">
    <location>
        <position position="9"/>
    </location>
    <ligand>
        <name>Mg(2+)</name>
        <dbReference type="ChEBI" id="CHEBI:18420"/>
        <label>2</label>
    </ligand>
</feature>
<feature type="binding site" evidence="1">
    <location>
        <position position="47"/>
    </location>
    <ligand>
        <name>Mg(2+)</name>
        <dbReference type="ChEBI" id="CHEBI:18420"/>
        <label>1</label>
    </ligand>
</feature>
<feature type="binding site" evidence="1">
    <location>
        <position position="69"/>
    </location>
    <ligand>
        <name>Mg(2+)</name>
        <dbReference type="ChEBI" id="CHEBI:18420"/>
        <label>1</label>
    </ligand>
</feature>
<feature type="binding site" evidence="1">
    <location>
        <position position="133"/>
    </location>
    <ligand>
        <name>Mg(2+)</name>
        <dbReference type="ChEBI" id="CHEBI:18420"/>
        <label>2</label>
    </ligand>
</feature>
<dbReference type="EC" id="3.1.26.4" evidence="1"/>
<dbReference type="EMBL" id="AP008229">
    <property type="protein sequence ID" value="BAE67695.1"/>
    <property type="molecule type" value="Genomic_DNA"/>
</dbReference>
<dbReference type="RefSeq" id="WP_011257888.1">
    <property type="nucleotide sequence ID" value="NC_007705.1"/>
</dbReference>
<dbReference type="SMR" id="Q2P6Y2"/>
<dbReference type="GeneID" id="77338613"/>
<dbReference type="KEGG" id="xom:XOO0940"/>
<dbReference type="HOGENOM" id="CLU_030894_6_0_6"/>
<dbReference type="GO" id="GO:0005737">
    <property type="term" value="C:cytoplasm"/>
    <property type="evidence" value="ECO:0007669"/>
    <property type="project" value="UniProtKB-SubCell"/>
</dbReference>
<dbReference type="GO" id="GO:0000287">
    <property type="term" value="F:magnesium ion binding"/>
    <property type="evidence" value="ECO:0007669"/>
    <property type="project" value="UniProtKB-UniRule"/>
</dbReference>
<dbReference type="GO" id="GO:0003676">
    <property type="term" value="F:nucleic acid binding"/>
    <property type="evidence" value="ECO:0007669"/>
    <property type="project" value="InterPro"/>
</dbReference>
<dbReference type="GO" id="GO:0004523">
    <property type="term" value="F:RNA-DNA hybrid ribonuclease activity"/>
    <property type="evidence" value="ECO:0007669"/>
    <property type="project" value="UniProtKB-UniRule"/>
</dbReference>
<dbReference type="GO" id="GO:0043137">
    <property type="term" value="P:DNA replication, removal of RNA primer"/>
    <property type="evidence" value="ECO:0007669"/>
    <property type="project" value="TreeGrafter"/>
</dbReference>
<dbReference type="CDD" id="cd09278">
    <property type="entry name" value="RNase_HI_prokaryote_like"/>
    <property type="match status" value="1"/>
</dbReference>
<dbReference type="FunFam" id="3.30.420.10:FF:000008">
    <property type="entry name" value="Ribonuclease H"/>
    <property type="match status" value="1"/>
</dbReference>
<dbReference type="Gene3D" id="3.30.420.10">
    <property type="entry name" value="Ribonuclease H-like superfamily/Ribonuclease H"/>
    <property type="match status" value="1"/>
</dbReference>
<dbReference type="HAMAP" id="MF_00042">
    <property type="entry name" value="RNase_H"/>
    <property type="match status" value="1"/>
</dbReference>
<dbReference type="InterPro" id="IPR050092">
    <property type="entry name" value="RNase_H"/>
</dbReference>
<dbReference type="InterPro" id="IPR012337">
    <property type="entry name" value="RNaseH-like_sf"/>
</dbReference>
<dbReference type="InterPro" id="IPR002156">
    <property type="entry name" value="RNaseH_domain"/>
</dbReference>
<dbReference type="InterPro" id="IPR036397">
    <property type="entry name" value="RNaseH_sf"/>
</dbReference>
<dbReference type="InterPro" id="IPR022892">
    <property type="entry name" value="RNaseHI"/>
</dbReference>
<dbReference type="NCBIfam" id="NF001236">
    <property type="entry name" value="PRK00203.1"/>
    <property type="match status" value="1"/>
</dbReference>
<dbReference type="PANTHER" id="PTHR10642">
    <property type="entry name" value="RIBONUCLEASE H1"/>
    <property type="match status" value="1"/>
</dbReference>
<dbReference type="PANTHER" id="PTHR10642:SF26">
    <property type="entry name" value="RIBONUCLEASE H1"/>
    <property type="match status" value="1"/>
</dbReference>
<dbReference type="Pfam" id="PF00075">
    <property type="entry name" value="RNase_H"/>
    <property type="match status" value="1"/>
</dbReference>
<dbReference type="SUPFAM" id="SSF53098">
    <property type="entry name" value="Ribonuclease H-like"/>
    <property type="match status" value="1"/>
</dbReference>
<dbReference type="PROSITE" id="PS50879">
    <property type="entry name" value="RNASE_H_1"/>
    <property type="match status" value="1"/>
</dbReference>
<organism>
    <name type="scientific">Xanthomonas oryzae pv. oryzae (strain MAFF 311018)</name>
    <dbReference type="NCBI Taxonomy" id="342109"/>
    <lineage>
        <taxon>Bacteria</taxon>
        <taxon>Pseudomonadati</taxon>
        <taxon>Pseudomonadota</taxon>
        <taxon>Gammaproteobacteria</taxon>
        <taxon>Lysobacterales</taxon>
        <taxon>Lysobacteraceae</taxon>
        <taxon>Xanthomonas</taxon>
    </lineage>
</organism>
<sequence length="150" mass="16900">MKSIEVHTDGSCLGNPGPGGWAALLRYNGREKELAGGEAVSTNNRMELMAAIMALETLTEPCEIVLHTDSQYVRQGITEWMPGWVRRNWKTAGGDPVKNRELWERLHAATQRHRIDWRWVKGHNGDPDNERVDVLARNQATAQRDGRATS</sequence>
<keyword id="KW-0963">Cytoplasm</keyword>
<keyword id="KW-0255">Endonuclease</keyword>
<keyword id="KW-0378">Hydrolase</keyword>
<keyword id="KW-0460">Magnesium</keyword>
<keyword id="KW-0479">Metal-binding</keyword>
<keyword id="KW-0540">Nuclease</keyword>
<comment type="function">
    <text evidence="1">Endonuclease that specifically degrades the RNA of RNA-DNA hybrids.</text>
</comment>
<comment type="catalytic activity">
    <reaction evidence="1">
        <text>Endonucleolytic cleavage to 5'-phosphomonoester.</text>
        <dbReference type="EC" id="3.1.26.4"/>
    </reaction>
</comment>
<comment type="cofactor">
    <cofactor evidence="1">
        <name>Mg(2+)</name>
        <dbReference type="ChEBI" id="CHEBI:18420"/>
    </cofactor>
    <text evidence="1">Binds 1 Mg(2+) ion per subunit. May bind a second metal ion at a regulatory site, or after substrate binding.</text>
</comment>
<comment type="subunit">
    <text evidence="1">Monomer.</text>
</comment>
<comment type="subcellular location">
    <subcellularLocation>
        <location evidence="1">Cytoplasm</location>
    </subcellularLocation>
</comment>
<comment type="similarity">
    <text evidence="1">Belongs to the RNase H family.</text>
</comment>
<name>RNH_XANOM</name>
<gene>
    <name evidence="1" type="primary">rnhA</name>
    <name type="ordered locus">XOO0940</name>
</gene>
<reference key="1">
    <citation type="journal article" date="2005" name="Jpn. Agric. Res. Q.">
        <title>Genome sequence of Xanthomonas oryzae pv. oryzae suggests contribution of large numbers of effector genes and insertion sequences to its race diversity.</title>
        <authorList>
            <person name="Ochiai H."/>
            <person name="Inoue Y."/>
            <person name="Takeya M."/>
            <person name="Sasaki A."/>
            <person name="Kaku H."/>
        </authorList>
    </citation>
    <scope>NUCLEOTIDE SEQUENCE [LARGE SCALE GENOMIC DNA]</scope>
    <source>
        <strain>MAFF 311018</strain>
    </source>
</reference>
<evidence type="ECO:0000255" key="1">
    <source>
        <dbReference type="HAMAP-Rule" id="MF_00042"/>
    </source>
</evidence>
<evidence type="ECO:0000255" key="2">
    <source>
        <dbReference type="PROSITE-ProRule" id="PRU00408"/>
    </source>
</evidence>
<proteinExistence type="inferred from homology"/>
<protein>
    <recommendedName>
        <fullName evidence="1">Ribonuclease H</fullName>
        <shortName evidence="1">RNase H</shortName>
        <ecNumber evidence="1">3.1.26.4</ecNumber>
    </recommendedName>
</protein>